<organism>
    <name type="scientific">Thermosipho melanesiensis (strain DSM 12029 / CIP 104789 / BI429)</name>
    <dbReference type="NCBI Taxonomy" id="391009"/>
    <lineage>
        <taxon>Bacteria</taxon>
        <taxon>Thermotogati</taxon>
        <taxon>Thermotogota</taxon>
        <taxon>Thermotogae</taxon>
        <taxon>Thermotogales</taxon>
        <taxon>Fervidobacteriaceae</taxon>
        <taxon>Thermosipho</taxon>
    </lineage>
</organism>
<comment type="function">
    <text evidence="1">Catalyzes the transfer of a dimethylallyl group onto the adenine at position 37 in tRNAs that read codons beginning with uridine, leading to the formation of N6-(dimethylallyl)adenosine (i(6)A).</text>
</comment>
<comment type="catalytic activity">
    <reaction evidence="1">
        <text>adenosine(37) in tRNA + dimethylallyl diphosphate = N(6)-dimethylallyladenosine(37) in tRNA + diphosphate</text>
        <dbReference type="Rhea" id="RHEA:26482"/>
        <dbReference type="Rhea" id="RHEA-COMP:10162"/>
        <dbReference type="Rhea" id="RHEA-COMP:10375"/>
        <dbReference type="ChEBI" id="CHEBI:33019"/>
        <dbReference type="ChEBI" id="CHEBI:57623"/>
        <dbReference type="ChEBI" id="CHEBI:74411"/>
        <dbReference type="ChEBI" id="CHEBI:74415"/>
        <dbReference type="EC" id="2.5.1.75"/>
    </reaction>
</comment>
<comment type="cofactor">
    <cofactor evidence="1">
        <name>Mg(2+)</name>
        <dbReference type="ChEBI" id="CHEBI:18420"/>
    </cofactor>
</comment>
<comment type="subunit">
    <text evidence="1">Monomer.</text>
</comment>
<comment type="similarity">
    <text evidence="1">Belongs to the IPP transferase family.</text>
</comment>
<feature type="chain" id="PRO_1000020679" description="tRNA dimethylallyltransferase">
    <location>
        <begin position="1"/>
        <end position="301"/>
    </location>
</feature>
<feature type="region of interest" description="Interaction with substrate tRNA" evidence="1">
    <location>
        <begin position="33"/>
        <end position="36"/>
    </location>
</feature>
<feature type="binding site" evidence="1">
    <location>
        <begin position="8"/>
        <end position="15"/>
    </location>
    <ligand>
        <name>ATP</name>
        <dbReference type="ChEBI" id="CHEBI:30616"/>
    </ligand>
</feature>
<feature type="binding site" evidence="1">
    <location>
        <begin position="10"/>
        <end position="15"/>
    </location>
    <ligand>
        <name>substrate</name>
    </ligand>
</feature>
<feature type="site" description="Interaction with substrate tRNA" evidence="1">
    <location>
        <position position="99"/>
    </location>
</feature>
<proteinExistence type="inferred from homology"/>
<sequence>MKYTIISGPTAVGKTDLIIEISTKIGAQIISLDSRQIYKLMDIGTAKPTKEEQQKVKHHLIDHIYPDEYYNAFYFRQDALKLRKQLTKKGIIPLFVGGTGLYIDALVKGFFEGAPKDENIRKHLNKLEKKEPGTLRTMLQKYDPEYALKIHPSDMKRTIRALEVFFKTGKKISELQSQTKISNKYKIIVLTRNRQELYERINTRVEKMIKAGLIDEVEKLLELYPKDINAFQTIGYKELIHYFENKYDLKTAIHLIKRNTRHFARRQLIWLRRYKNAIWINLSEISRRETIEKIEKIINEV</sequence>
<dbReference type="EC" id="2.5.1.75" evidence="1"/>
<dbReference type="EMBL" id="CP000716">
    <property type="protein sequence ID" value="ABR31245.1"/>
    <property type="molecule type" value="Genomic_DNA"/>
</dbReference>
<dbReference type="RefSeq" id="WP_012057604.1">
    <property type="nucleotide sequence ID" value="NC_009616.1"/>
</dbReference>
<dbReference type="SMR" id="A6LMU4"/>
<dbReference type="STRING" id="391009.Tmel_1398"/>
<dbReference type="KEGG" id="tme:Tmel_1398"/>
<dbReference type="eggNOG" id="COG0324">
    <property type="taxonomic scope" value="Bacteria"/>
</dbReference>
<dbReference type="HOGENOM" id="CLU_032616_0_1_0"/>
<dbReference type="OrthoDB" id="9776390at2"/>
<dbReference type="Proteomes" id="UP000001110">
    <property type="component" value="Chromosome"/>
</dbReference>
<dbReference type="GO" id="GO:0005524">
    <property type="term" value="F:ATP binding"/>
    <property type="evidence" value="ECO:0007669"/>
    <property type="project" value="UniProtKB-UniRule"/>
</dbReference>
<dbReference type="GO" id="GO:0052381">
    <property type="term" value="F:tRNA dimethylallyltransferase activity"/>
    <property type="evidence" value="ECO:0007669"/>
    <property type="project" value="UniProtKB-UniRule"/>
</dbReference>
<dbReference type="GO" id="GO:0006400">
    <property type="term" value="P:tRNA modification"/>
    <property type="evidence" value="ECO:0007669"/>
    <property type="project" value="TreeGrafter"/>
</dbReference>
<dbReference type="FunFam" id="1.10.20.140:FF:000001">
    <property type="entry name" value="tRNA dimethylallyltransferase"/>
    <property type="match status" value="1"/>
</dbReference>
<dbReference type="Gene3D" id="1.10.20.140">
    <property type="match status" value="1"/>
</dbReference>
<dbReference type="Gene3D" id="3.40.50.300">
    <property type="entry name" value="P-loop containing nucleotide triphosphate hydrolases"/>
    <property type="match status" value="1"/>
</dbReference>
<dbReference type="HAMAP" id="MF_00185">
    <property type="entry name" value="IPP_trans"/>
    <property type="match status" value="1"/>
</dbReference>
<dbReference type="InterPro" id="IPR039657">
    <property type="entry name" value="Dimethylallyltransferase"/>
</dbReference>
<dbReference type="InterPro" id="IPR018022">
    <property type="entry name" value="IPT"/>
</dbReference>
<dbReference type="InterPro" id="IPR027417">
    <property type="entry name" value="P-loop_NTPase"/>
</dbReference>
<dbReference type="NCBIfam" id="TIGR00174">
    <property type="entry name" value="miaA"/>
    <property type="match status" value="1"/>
</dbReference>
<dbReference type="PANTHER" id="PTHR11088">
    <property type="entry name" value="TRNA DIMETHYLALLYLTRANSFERASE"/>
    <property type="match status" value="1"/>
</dbReference>
<dbReference type="PANTHER" id="PTHR11088:SF60">
    <property type="entry name" value="TRNA DIMETHYLALLYLTRANSFERASE"/>
    <property type="match status" value="1"/>
</dbReference>
<dbReference type="Pfam" id="PF01715">
    <property type="entry name" value="IPPT"/>
    <property type="match status" value="1"/>
</dbReference>
<dbReference type="SUPFAM" id="SSF52540">
    <property type="entry name" value="P-loop containing nucleoside triphosphate hydrolases"/>
    <property type="match status" value="2"/>
</dbReference>
<evidence type="ECO:0000255" key="1">
    <source>
        <dbReference type="HAMAP-Rule" id="MF_00185"/>
    </source>
</evidence>
<protein>
    <recommendedName>
        <fullName evidence="1">tRNA dimethylallyltransferase</fullName>
        <ecNumber evidence="1">2.5.1.75</ecNumber>
    </recommendedName>
    <alternativeName>
        <fullName evidence="1">Dimethylallyl diphosphate:tRNA dimethylallyltransferase</fullName>
        <shortName evidence="1">DMAPP:tRNA dimethylallyltransferase</shortName>
        <shortName evidence="1">DMATase</shortName>
    </alternativeName>
    <alternativeName>
        <fullName evidence="1">Isopentenyl-diphosphate:tRNA isopentenyltransferase</fullName>
        <shortName evidence="1">IPP transferase</shortName>
        <shortName evidence="1">IPPT</shortName>
        <shortName evidence="1">IPTase</shortName>
    </alternativeName>
</protein>
<gene>
    <name evidence="1" type="primary">miaA</name>
    <name type="ordered locus">Tmel_1398</name>
</gene>
<accession>A6LMU4</accession>
<name>MIAA_THEM4</name>
<keyword id="KW-0067">ATP-binding</keyword>
<keyword id="KW-0460">Magnesium</keyword>
<keyword id="KW-0547">Nucleotide-binding</keyword>
<keyword id="KW-0808">Transferase</keyword>
<keyword id="KW-0819">tRNA processing</keyword>
<reference key="1">
    <citation type="submission" date="2007-05" db="EMBL/GenBank/DDBJ databases">
        <title>Complete sequence of Thermosipho melanesiensis BI429.</title>
        <authorList>
            <consortium name="US DOE Joint Genome Institute"/>
            <person name="Copeland A."/>
            <person name="Lucas S."/>
            <person name="Lapidus A."/>
            <person name="Barry K."/>
            <person name="Glavina del Rio T."/>
            <person name="Dalin E."/>
            <person name="Tice H."/>
            <person name="Pitluck S."/>
            <person name="Chertkov O."/>
            <person name="Brettin T."/>
            <person name="Bruce D."/>
            <person name="Detter J.C."/>
            <person name="Han C."/>
            <person name="Schmutz J."/>
            <person name="Larimer F."/>
            <person name="Land M."/>
            <person name="Hauser L."/>
            <person name="Kyrpides N."/>
            <person name="Mikhailova N."/>
            <person name="Nelson K."/>
            <person name="Gogarten J.P."/>
            <person name="Noll K."/>
            <person name="Richardson P."/>
        </authorList>
    </citation>
    <scope>NUCLEOTIDE SEQUENCE [LARGE SCALE GENOMIC DNA]</scope>
    <source>
        <strain>DSM 12029 / CIP 104789 / BI429</strain>
    </source>
</reference>